<protein>
    <recommendedName>
        <fullName evidence="1">Ion-translocating oxidoreductase complex subunit G</fullName>
        <ecNumber evidence="1">7.-.-.-</ecNumber>
    </recommendedName>
    <alternativeName>
        <fullName evidence="1">Rnf electron transport complex subunit G</fullName>
    </alternativeName>
</protein>
<dbReference type="EC" id="7.-.-.-" evidence="1"/>
<dbReference type="EMBL" id="CP000020">
    <property type="protein sequence ID" value="AAW85426.1"/>
    <property type="molecule type" value="Genomic_DNA"/>
</dbReference>
<dbReference type="RefSeq" id="WP_011261585.1">
    <property type="nucleotide sequence ID" value="NC_006840.2"/>
</dbReference>
<dbReference type="RefSeq" id="YP_204314.1">
    <property type="nucleotide sequence ID" value="NC_006840.2"/>
</dbReference>
<dbReference type="SMR" id="Q5E6C0"/>
<dbReference type="STRING" id="312309.VF_0931"/>
<dbReference type="DNASU" id="3278153"/>
<dbReference type="EnsemblBacteria" id="AAW85426">
    <property type="protein sequence ID" value="AAW85426"/>
    <property type="gene ID" value="VF_0931"/>
</dbReference>
<dbReference type="GeneID" id="54163599"/>
<dbReference type="KEGG" id="vfi:VF_0931"/>
<dbReference type="PATRIC" id="fig|312309.11.peg.929"/>
<dbReference type="eggNOG" id="COG4659">
    <property type="taxonomic scope" value="Bacteria"/>
</dbReference>
<dbReference type="HOGENOM" id="CLU_077882_1_0_6"/>
<dbReference type="OrthoDB" id="9784165at2"/>
<dbReference type="Proteomes" id="UP000000537">
    <property type="component" value="Chromosome I"/>
</dbReference>
<dbReference type="GO" id="GO:0005886">
    <property type="term" value="C:plasma membrane"/>
    <property type="evidence" value="ECO:0007669"/>
    <property type="project" value="UniProtKB-SubCell"/>
</dbReference>
<dbReference type="GO" id="GO:0009055">
    <property type="term" value="F:electron transfer activity"/>
    <property type="evidence" value="ECO:0007669"/>
    <property type="project" value="InterPro"/>
</dbReference>
<dbReference type="GO" id="GO:0010181">
    <property type="term" value="F:FMN binding"/>
    <property type="evidence" value="ECO:0007669"/>
    <property type="project" value="InterPro"/>
</dbReference>
<dbReference type="GO" id="GO:0022900">
    <property type="term" value="P:electron transport chain"/>
    <property type="evidence" value="ECO:0007669"/>
    <property type="project" value="UniProtKB-UniRule"/>
</dbReference>
<dbReference type="HAMAP" id="MF_00479">
    <property type="entry name" value="RsxG_RnfG"/>
    <property type="match status" value="1"/>
</dbReference>
<dbReference type="InterPro" id="IPR007329">
    <property type="entry name" value="FMN-bd"/>
</dbReference>
<dbReference type="InterPro" id="IPR010209">
    <property type="entry name" value="Ion_transpt_RnfG/RsxG"/>
</dbReference>
<dbReference type="NCBIfam" id="NF002519">
    <property type="entry name" value="PRK01908.1"/>
    <property type="match status" value="1"/>
</dbReference>
<dbReference type="NCBIfam" id="TIGR01947">
    <property type="entry name" value="rnfG"/>
    <property type="match status" value="1"/>
</dbReference>
<dbReference type="PANTHER" id="PTHR36118">
    <property type="entry name" value="ION-TRANSLOCATING OXIDOREDUCTASE COMPLEX SUBUNIT G"/>
    <property type="match status" value="1"/>
</dbReference>
<dbReference type="PANTHER" id="PTHR36118:SF1">
    <property type="entry name" value="ION-TRANSLOCATING OXIDOREDUCTASE COMPLEX SUBUNIT G"/>
    <property type="match status" value="1"/>
</dbReference>
<dbReference type="Pfam" id="PF04205">
    <property type="entry name" value="FMN_bind"/>
    <property type="match status" value="1"/>
</dbReference>
<dbReference type="PIRSF" id="PIRSF006091">
    <property type="entry name" value="E_trnsport_RnfG"/>
    <property type="match status" value="1"/>
</dbReference>
<dbReference type="SMART" id="SM00900">
    <property type="entry name" value="FMN_bind"/>
    <property type="match status" value="1"/>
</dbReference>
<name>RNFG_ALIF1</name>
<proteinExistence type="inferred from homology"/>
<comment type="function">
    <text evidence="1">Part of a membrane-bound complex that couples electron transfer with translocation of ions across the membrane.</text>
</comment>
<comment type="cofactor">
    <cofactor evidence="1">
        <name>FMN</name>
        <dbReference type="ChEBI" id="CHEBI:58210"/>
    </cofactor>
</comment>
<comment type="subunit">
    <text evidence="1">The complex is composed of six subunits: RnfA, RnfB, RnfC, RnfD, RnfE and RnfG.</text>
</comment>
<comment type="subcellular location">
    <subcellularLocation>
        <location evidence="1">Cell inner membrane</location>
        <topology evidence="1">Single-pass membrane protein</topology>
    </subcellularLocation>
</comment>
<comment type="similarity">
    <text evidence="1">Belongs to the RnfG family.</text>
</comment>
<reference key="1">
    <citation type="journal article" date="2005" name="Proc. Natl. Acad. Sci. U.S.A.">
        <title>Complete genome sequence of Vibrio fischeri: a symbiotic bacterium with pathogenic congeners.</title>
        <authorList>
            <person name="Ruby E.G."/>
            <person name="Urbanowski M."/>
            <person name="Campbell J."/>
            <person name="Dunn A."/>
            <person name="Faini M."/>
            <person name="Gunsalus R."/>
            <person name="Lostroh P."/>
            <person name="Lupp C."/>
            <person name="McCann J."/>
            <person name="Millikan D."/>
            <person name="Schaefer A."/>
            <person name="Stabb E."/>
            <person name="Stevens A."/>
            <person name="Visick K."/>
            <person name="Whistler C."/>
            <person name="Greenberg E.P."/>
        </authorList>
    </citation>
    <scope>NUCLEOTIDE SEQUENCE [LARGE SCALE GENOMIC DNA]</scope>
    <source>
        <strain>ATCC 700601 / ES114</strain>
    </source>
</reference>
<evidence type="ECO:0000255" key="1">
    <source>
        <dbReference type="HAMAP-Rule" id="MF_00479"/>
    </source>
</evidence>
<feature type="chain" id="PRO_1000014131" description="Ion-translocating oxidoreductase complex subunit G">
    <location>
        <begin position="1"/>
        <end position="210"/>
    </location>
</feature>
<feature type="transmembrane region" description="Helical" evidence="1">
    <location>
        <begin position="9"/>
        <end position="29"/>
    </location>
</feature>
<feature type="modified residue" description="FMN phosphoryl threonine" evidence="1">
    <location>
        <position position="176"/>
    </location>
</feature>
<gene>
    <name evidence="1" type="primary">rnfG</name>
    <name type="ordered locus">VF_0931</name>
</gene>
<sequence length="210" mass="23001">MLTTMKKSSLVLALFAIAATALVTITYALTKDQIAYQQQQQLLSVLNQVVPKEQHDNELYKACVLVKNKDALGSKQAMPIYLASLNGQHSGAAIEAIAPDGYSGNIKIIVGVDSDAMVTGVRVLSHQETPGLGDKIDIRITRWVDGFLGKTVENAEDKNWAVQKDGGQFDQFTGATITPRAVVKAVKRAVWFYKTHQEELQTLPLNCETK</sequence>
<accession>Q5E6C0</accession>
<organism>
    <name type="scientific">Aliivibrio fischeri (strain ATCC 700601 / ES114)</name>
    <name type="common">Vibrio fischeri</name>
    <dbReference type="NCBI Taxonomy" id="312309"/>
    <lineage>
        <taxon>Bacteria</taxon>
        <taxon>Pseudomonadati</taxon>
        <taxon>Pseudomonadota</taxon>
        <taxon>Gammaproteobacteria</taxon>
        <taxon>Vibrionales</taxon>
        <taxon>Vibrionaceae</taxon>
        <taxon>Aliivibrio</taxon>
    </lineage>
</organism>
<keyword id="KW-0997">Cell inner membrane</keyword>
<keyword id="KW-1003">Cell membrane</keyword>
<keyword id="KW-0249">Electron transport</keyword>
<keyword id="KW-0285">Flavoprotein</keyword>
<keyword id="KW-0288">FMN</keyword>
<keyword id="KW-0472">Membrane</keyword>
<keyword id="KW-0597">Phosphoprotein</keyword>
<keyword id="KW-1185">Reference proteome</keyword>
<keyword id="KW-1278">Translocase</keyword>
<keyword id="KW-0812">Transmembrane</keyword>
<keyword id="KW-1133">Transmembrane helix</keyword>
<keyword id="KW-0813">Transport</keyword>